<evidence type="ECO:0000255" key="1">
    <source>
        <dbReference type="HAMAP-Rule" id="MF_00283"/>
    </source>
</evidence>
<feature type="chain" id="PRO_0000126935" description="Phenylalanine--tRNA ligase beta subunit">
    <location>
        <begin position="1"/>
        <end position="809"/>
    </location>
</feature>
<feature type="domain" description="tRNA-binding" evidence="1">
    <location>
        <begin position="39"/>
        <end position="153"/>
    </location>
</feature>
<feature type="domain" description="B5" evidence="1">
    <location>
        <begin position="404"/>
        <end position="479"/>
    </location>
</feature>
<feature type="domain" description="FDX-ACB" evidence="1">
    <location>
        <begin position="706"/>
        <end position="808"/>
    </location>
</feature>
<feature type="binding site" evidence="1">
    <location>
        <position position="457"/>
    </location>
    <ligand>
        <name>Mg(2+)</name>
        <dbReference type="ChEBI" id="CHEBI:18420"/>
        <note>shared with alpha subunit</note>
    </ligand>
</feature>
<feature type="binding site" evidence="1">
    <location>
        <position position="463"/>
    </location>
    <ligand>
        <name>Mg(2+)</name>
        <dbReference type="ChEBI" id="CHEBI:18420"/>
        <note>shared with alpha subunit</note>
    </ligand>
</feature>
<feature type="binding site" evidence="1">
    <location>
        <position position="466"/>
    </location>
    <ligand>
        <name>Mg(2+)</name>
        <dbReference type="ChEBI" id="CHEBI:18420"/>
        <note>shared with alpha subunit</note>
    </ligand>
</feature>
<feature type="binding site" evidence="1">
    <location>
        <position position="467"/>
    </location>
    <ligand>
        <name>Mg(2+)</name>
        <dbReference type="ChEBI" id="CHEBI:18420"/>
        <note>shared with alpha subunit</note>
    </ligand>
</feature>
<keyword id="KW-0030">Aminoacyl-tRNA synthetase</keyword>
<keyword id="KW-0067">ATP-binding</keyword>
<keyword id="KW-0963">Cytoplasm</keyword>
<keyword id="KW-0436">Ligase</keyword>
<keyword id="KW-0460">Magnesium</keyword>
<keyword id="KW-0479">Metal-binding</keyword>
<keyword id="KW-0547">Nucleotide-binding</keyword>
<keyword id="KW-0648">Protein biosynthesis</keyword>
<keyword id="KW-1185">Reference proteome</keyword>
<keyword id="KW-0694">RNA-binding</keyword>
<keyword id="KW-0820">tRNA-binding</keyword>
<organism>
    <name type="scientific">Ralstonia nicotianae (strain ATCC BAA-1114 / GMI1000)</name>
    <name type="common">Ralstonia solanacearum</name>
    <dbReference type="NCBI Taxonomy" id="267608"/>
    <lineage>
        <taxon>Bacteria</taxon>
        <taxon>Pseudomonadati</taxon>
        <taxon>Pseudomonadota</taxon>
        <taxon>Betaproteobacteria</taxon>
        <taxon>Burkholderiales</taxon>
        <taxon>Burkholderiaceae</taxon>
        <taxon>Ralstonia</taxon>
        <taxon>Ralstonia solanacearum species complex</taxon>
    </lineage>
</organism>
<proteinExistence type="inferred from homology"/>
<comment type="catalytic activity">
    <reaction evidence="1">
        <text>tRNA(Phe) + L-phenylalanine + ATP = L-phenylalanyl-tRNA(Phe) + AMP + diphosphate + H(+)</text>
        <dbReference type="Rhea" id="RHEA:19413"/>
        <dbReference type="Rhea" id="RHEA-COMP:9668"/>
        <dbReference type="Rhea" id="RHEA-COMP:9699"/>
        <dbReference type="ChEBI" id="CHEBI:15378"/>
        <dbReference type="ChEBI" id="CHEBI:30616"/>
        <dbReference type="ChEBI" id="CHEBI:33019"/>
        <dbReference type="ChEBI" id="CHEBI:58095"/>
        <dbReference type="ChEBI" id="CHEBI:78442"/>
        <dbReference type="ChEBI" id="CHEBI:78531"/>
        <dbReference type="ChEBI" id="CHEBI:456215"/>
        <dbReference type="EC" id="6.1.1.20"/>
    </reaction>
</comment>
<comment type="cofactor">
    <cofactor evidence="1">
        <name>Mg(2+)</name>
        <dbReference type="ChEBI" id="CHEBI:18420"/>
    </cofactor>
    <text evidence="1">Binds 2 magnesium ions per tetramer.</text>
</comment>
<comment type="subunit">
    <text evidence="1">Tetramer of two alpha and two beta subunits.</text>
</comment>
<comment type="subcellular location">
    <subcellularLocation>
        <location evidence="1">Cytoplasm</location>
    </subcellularLocation>
</comment>
<comment type="similarity">
    <text evidence="1">Belongs to the phenylalanyl-tRNA synthetase beta subunit family. Type 1 subfamily.</text>
</comment>
<dbReference type="EC" id="6.1.1.20" evidence="1"/>
<dbReference type="EMBL" id="AL646052">
    <property type="protein sequence ID" value="CAD15284.1"/>
    <property type="molecule type" value="Genomic_DNA"/>
</dbReference>
<dbReference type="RefSeq" id="WP_011001524.1">
    <property type="nucleotide sequence ID" value="NC_003295.1"/>
</dbReference>
<dbReference type="SMR" id="Q8XZ24"/>
<dbReference type="STRING" id="267608.RSc1582"/>
<dbReference type="EnsemblBacteria" id="CAD15284">
    <property type="protein sequence ID" value="CAD15284"/>
    <property type="gene ID" value="RSc1582"/>
</dbReference>
<dbReference type="KEGG" id="rso:RSc1582"/>
<dbReference type="eggNOG" id="COG0072">
    <property type="taxonomic scope" value="Bacteria"/>
</dbReference>
<dbReference type="eggNOG" id="COG0073">
    <property type="taxonomic scope" value="Bacteria"/>
</dbReference>
<dbReference type="HOGENOM" id="CLU_016891_0_0_4"/>
<dbReference type="Proteomes" id="UP000001436">
    <property type="component" value="Chromosome"/>
</dbReference>
<dbReference type="GO" id="GO:0009328">
    <property type="term" value="C:phenylalanine-tRNA ligase complex"/>
    <property type="evidence" value="ECO:0007669"/>
    <property type="project" value="TreeGrafter"/>
</dbReference>
<dbReference type="GO" id="GO:0005524">
    <property type="term" value="F:ATP binding"/>
    <property type="evidence" value="ECO:0007669"/>
    <property type="project" value="UniProtKB-UniRule"/>
</dbReference>
<dbReference type="GO" id="GO:0000287">
    <property type="term" value="F:magnesium ion binding"/>
    <property type="evidence" value="ECO:0007669"/>
    <property type="project" value="UniProtKB-UniRule"/>
</dbReference>
<dbReference type="GO" id="GO:0004826">
    <property type="term" value="F:phenylalanine-tRNA ligase activity"/>
    <property type="evidence" value="ECO:0007669"/>
    <property type="project" value="UniProtKB-UniRule"/>
</dbReference>
<dbReference type="GO" id="GO:0000049">
    <property type="term" value="F:tRNA binding"/>
    <property type="evidence" value="ECO:0007669"/>
    <property type="project" value="UniProtKB-KW"/>
</dbReference>
<dbReference type="GO" id="GO:0006432">
    <property type="term" value="P:phenylalanyl-tRNA aminoacylation"/>
    <property type="evidence" value="ECO:0007669"/>
    <property type="project" value="UniProtKB-UniRule"/>
</dbReference>
<dbReference type="CDD" id="cd00769">
    <property type="entry name" value="PheRS_beta_core"/>
    <property type="match status" value="1"/>
</dbReference>
<dbReference type="CDD" id="cd02796">
    <property type="entry name" value="tRNA_bind_bactPheRS"/>
    <property type="match status" value="1"/>
</dbReference>
<dbReference type="FunFam" id="2.40.50.140:FF:000045">
    <property type="entry name" value="Phenylalanine--tRNA ligase beta subunit"/>
    <property type="match status" value="1"/>
</dbReference>
<dbReference type="FunFam" id="3.30.56.10:FF:000002">
    <property type="entry name" value="Phenylalanine--tRNA ligase beta subunit"/>
    <property type="match status" value="1"/>
</dbReference>
<dbReference type="FunFam" id="3.30.930.10:FF:000022">
    <property type="entry name" value="Phenylalanine--tRNA ligase beta subunit"/>
    <property type="match status" value="1"/>
</dbReference>
<dbReference type="Gene3D" id="3.30.56.10">
    <property type="match status" value="2"/>
</dbReference>
<dbReference type="Gene3D" id="3.30.930.10">
    <property type="entry name" value="Bira Bifunctional Protein, Domain 2"/>
    <property type="match status" value="1"/>
</dbReference>
<dbReference type="Gene3D" id="3.30.70.380">
    <property type="entry name" value="Ferrodoxin-fold anticodon-binding domain"/>
    <property type="match status" value="1"/>
</dbReference>
<dbReference type="Gene3D" id="2.40.50.140">
    <property type="entry name" value="Nucleic acid-binding proteins"/>
    <property type="match status" value="1"/>
</dbReference>
<dbReference type="Gene3D" id="3.50.40.10">
    <property type="entry name" value="Phenylalanyl-trna Synthetase, Chain B, domain 3"/>
    <property type="match status" value="1"/>
</dbReference>
<dbReference type="HAMAP" id="MF_00283">
    <property type="entry name" value="Phe_tRNA_synth_beta1"/>
    <property type="match status" value="1"/>
</dbReference>
<dbReference type="InterPro" id="IPR045864">
    <property type="entry name" value="aa-tRNA-synth_II/BPL/LPL"/>
</dbReference>
<dbReference type="InterPro" id="IPR005146">
    <property type="entry name" value="B3/B4_tRNA-bd"/>
</dbReference>
<dbReference type="InterPro" id="IPR009061">
    <property type="entry name" value="DNA-bd_dom_put_sf"/>
</dbReference>
<dbReference type="InterPro" id="IPR005121">
    <property type="entry name" value="Fdx_antiC-bd"/>
</dbReference>
<dbReference type="InterPro" id="IPR036690">
    <property type="entry name" value="Fdx_antiC-bd_sf"/>
</dbReference>
<dbReference type="InterPro" id="IPR012340">
    <property type="entry name" value="NA-bd_OB-fold"/>
</dbReference>
<dbReference type="InterPro" id="IPR045060">
    <property type="entry name" value="Phe-tRNA-ligase_IIc_bsu"/>
</dbReference>
<dbReference type="InterPro" id="IPR004532">
    <property type="entry name" value="Phe-tRNA-ligase_IIc_bsu_bact"/>
</dbReference>
<dbReference type="InterPro" id="IPR020825">
    <property type="entry name" value="Phe-tRNA_synthase-like_B3/B4"/>
</dbReference>
<dbReference type="InterPro" id="IPR041616">
    <property type="entry name" value="PheRS_beta_core"/>
</dbReference>
<dbReference type="InterPro" id="IPR002547">
    <property type="entry name" value="tRNA-bd_dom"/>
</dbReference>
<dbReference type="InterPro" id="IPR033714">
    <property type="entry name" value="tRNA_bind_bactPheRS"/>
</dbReference>
<dbReference type="InterPro" id="IPR005147">
    <property type="entry name" value="tRNA_synthase_B5-dom"/>
</dbReference>
<dbReference type="NCBIfam" id="TIGR00472">
    <property type="entry name" value="pheT_bact"/>
    <property type="match status" value="1"/>
</dbReference>
<dbReference type="NCBIfam" id="NF045760">
    <property type="entry name" value="YtpR"/>
    <property type="match status" value="1"/>
</dbReference>
<dbReference type="PANTHER" id="PTHR10947:SF0">
    <property type="entry name" value="PHENYLALANINE--TRNA LIGASE BETA SUBUNIT"/>
    <property type="match status" value="1"/>
</dbReference>
<dbReference type="PANTHER" id="PTHR10947">
    <property type="entry name" value="PHENYLALANYL-TRNA SYNTHETASE BETA CHAIN AND LEUCINE-RICH REPEAT-CONTAINING PROTEIN 47"/>
    <property type="match status" value="1"/>
</dbReference>
<dbReference type="Pfam" id="PF03483">
    <property type="entry name" value="B3_4"/>
    <property type="match status" value="1"/>
</dbReference>
<dbReference type="Pfam" id="PF03484">
    <property type="entry name" value="B5"/>
    <property type="match status" value="1"/>
</dbReference>
<dbReference type="Pfam" id="PF03147">
    <property type="entry name" value="FDX-ACB"/>
    <property type="match status" value="1"/>
</dbReference>
<dbReference type="Pfam" id="PF01588">
    <property type="entry name" value="tRNA_bind"/>
    <property type="match status" value="1"/>
</dbReference>
<dbReference type="Pfam" id="PF17759">
    <property type="entry name" value="tRNA_synthFbeta"/>
    <property type="match status" value="1"/>
</dbReference>
<dbReference type="SMART" id="SM00873">
    <property type="entry name" value="B3_4"/>
    <property type="match status" value="1"/>
</dbReference>
<dbReference type="SMART" id="SM00874">
    <property type="entry name" value="B5"/>
    <property type="match status" value="1"/>
</dbReference>
<dbReference type="SMART" id="SM00896">
    <property type="entry name" value="FDX-ACB"/>
    <property type="match status" value="1"/>
</dbReference>
<dbReference type="SUPFAM" id="SSF54991">
    <property type="entry name" value="Anticodon-binding domain of PheRS"/>
    <property type="match status" value="1"/>
</dbReference>
<dbReference type="SUPFAM" id="SSF55681">
    <property type="entry name" value="Class II aaRS and biotin synthetases"/>
    <property type="match status" value="1"/>
</dbReference>
<dbReference type="SUPFAM" id="SSF50249">
    <property type="entry name" value="Nucleic acid-binding proteins"/>
    <property type="match status" value="1"/>
</dbReference>
<dbReference type="SUPFAM" id="SSF56037">
    <property type="entry name" value="PheT/TilS domain"/>
    <property type="match status" value="1"/>
</dbReference>
<dbReference type="SUPFAM" id="SSF46955">
    <property type="entry name" value="Putative DNA-binding domain"/>
    <property type="match status" value="1"/>
</dbReference>
<dbReference type="PROSITE" id="PS51483">
    <property type="entry name" value="B5"/>
    <property type="match status" value="1"/>
</dbReference>
<dbReference type="PROSITE" id="PS51447">
    <property type="entry name" value="FDX_ACB"/>
    <property type="match status" value="1"/>
</dbReference>
<dbReference type="PROSITE" id="PS50886">
    <property type="entry name" value="TRBD"/>
    <property type="match status" value="1"/>
</dbReference>
<protein>
    <recommendedName>
        <fullName evidence="1">Phenylalanine--tRNA ligase beta subunit</fullName>
        <ecNumber evidence="1">6.1.1.20</ecNumber>
    </recommendedName>
    <alternativeName>
        <fullName evidence="1">Phenylalanyl-tRNA synthetase beta subunit</fullName>
        <shortName evidence="1">PheRS</shortName>
    </alternativeName>
</protein>
<name>SYFB_RALN1</name>
<accession>Q8XZ24</accession>
<gene>
    <name evidence="1" type="primary">pheT</name>
    <name type="ordered locus">RSc1582</name>
    <name type="ORF">RS05825</name>
</gene>
<sequence length="809" mass="88486">MQFPESWLRSFVNPPIATAELSHRLTMAGLEVEEVDPVAPPFSQIVVGHVVEVNKHPDADRLNVCKVDAGTGELLQIVCGAPNVSVGIKVPCALVGAELPPGDDGKPFKIKIGKLRGVESYGMLCSARELKLSEEHGGLLILPEDTPVGADIRKVLDLDDQIFIIKLTPNKADCLSIHGVAREVSALTGAPITLPTMAPVAVTLSDKLPVKVEAPDLCGRFAGRIIRGVNARAKTPAWMVSRIERAGMRSVSALVDISNYVMLELGRPSHVFDLDKIHGGLTVRWGKPGEQLKLLNGDTVTVDDKVGVISDEQAIESLAGIMGGDKTAVTLDTQNIYVEAAFWWPAAIQGRARRYNFSTDAGHRFERGVDYATIVEHIERISALILDICGGQAGPIDDQIVNCPKREPVRMRVARAARVLGIPLSHEVVSDVFKRLGLTFSVDGDVFVVEPPSYRFDIEIEEDLIEEVARIYGFEQIPAKPPVAENAMRPTNEARRTMHDVRHAVAARDYHEVVNFAFVETEWEADFAGNTQPIPLLNPIASQYSVMRSTLIGGLLDKVRYNLNRKASRVRLFEVGRVFRRDAEVADGGLSVAGYAQPMRVGGIAYGPAAEEQWGVPARAVDFFDVKGDVESLLWPLQARFERAEHSALHPGRAARVVLDGRAVGWIGELHPRWLQKYELPTAPVVWELDLDAITAVGLPAYREVPRVPAVTRDIALVVRQDVGVQDLVDAFEKAAAGMPWQRYLQGVVLFDEFRPKAATAAIGAQEKSLAFRITLQDTDSTLQDDLVEAATQQLIRAAGDAFGARLRA</sequence>
<reference key="1">
    <citation type="journal article" date="2002" name="Nature">
        <title>Genome sequence of the plant pathogen Ralstonia solanacearum.</title>
        <authorList>
            <person name="Salanoubat M."/>
            <person name="Genin S."/>
            <person name="Artiguenave F."/>
            <person name="Gouzy J."/>
            <person name="Mangenot S."/>
            <person name="Arlat M."/>
            <person name="Billault A."/>
            <person name="Brottier P."/>
            <person name="Camus J.-C."/>
            <person name="Cattolico L."/>
            <person name="Chandler M."/>
            <person name="Choisne N."/>
            <person name="Claudel-Renard C."/>
            <person name="Cunnac S."/>
            <person name="Demange N."/>
            <person name="Gaspin C."/>
            <person name="Lavie M."/>
            <person name="Moisan A."/>
            <person name="Robert C."/>
            <person name="Saurin W."/>
            <person name="Schiex T."/>
            <person name="Siguier P."/>
            <person name="Thebault P."/>
            <person name="Whalen M."/>
            <person name="Wincker P."/>
            <person name="Levy M."/>
            <person name="Weissenbach J."/>
            <person name="Boucher C.A."/>
        </authorList>
    </citation>
    <scope>NUCLEOTIDE SEQUENCE [LARGE SCALE GENOMIC DNA]</scope>
    <source>
        <strain>ATCC BAA-1114 / GMI1000</strain>
    </source>
</reference>